<proteinExistence type="evidence at protein level"/>
<comment type="function">
    <text evidence="1">Required for genome encapsidation. Forms ribonucleoprotein complexes along with TGB1 helicase and viral RNA (By similarity).</text>
</comment>
<comment type="subunit">
    <text evidence="3">Interacts with host NbANKr; this interaction targets the capsid protein to the host chloroplast.</text>
</comment>
<comment type="subcellular location">
    <subcellularLocation>
        <location evidence="4">Virion</location>
    </subcellularLocation>
    <subcellularLocation>
        <location evidence="3">Host chloroplast envelope</location>
    </subcellularLocation>
</comment>
<comment type="similarity">
    <text evidence="4">Belongs to the potexvirus capsid protein family.</text>
</comment>
<dbReference type="EMBL" id="EU489641">
    <property type="protein sequence ID" value="ACA53378.1"/>
    <property type="molecule type" value="Genomic_RNA"/>
</dbReference>
<dbReference type="RefSeq" id="YP_001718503.1">
    <property type="nucleotide sequence ID" value="NC_010434.1"/>
</dbReference>
<dbReference type="SMR" id="B1PS80"/>
<dbReference type="KEGG" id="vg:6000101"/>
<dbReference type="Proteomes" id="UP000008689">
    <property type="component" value="Segment"/>
</dbReference>
<dbReference type="GO" id="GO:0019029">
    <property type="term" value="C:helical viral capsid"/>
    <property type="evidence" value="ECO:0007669"/>
    <property type="project" value="UniProtKB-KW"/>
</dbReference>
<dbReference type="GO" id="GO:1990904">
    <property type="term" value="C:ribonucleoprotein complex"/>
    <property type="evidence" value="ECO:0007669"/>
    <property type="project" value="UniProtKB-KW"/>
</dbReference>
<dbReference type="GO" id="GO:0005198">
    <property type="term" value="F:structural molecule activity"/>
    <property type="evidence" value="ECO:0007669"/>
    <property type="project" value="InterPro"/>
</dbReference>
<dbReference type="InterPro" id="IPR000052">
    <property type="entry name" value="Pltvir_coat"/>
</dbReference>
<dbReference type="Pfam" id="PF00286">
    <property type="entry name" value="Flexi_CP"/>
    <property type="match status" value="1"/>
</dbReference>
<dbReference type="PRINTS" id="PR00232">
    <property type="entry name" value="POTXCARLCOAT"/>
</dbReference>
<accession>B1PS80</accession>
<organism>
    <name type="scientific">Lolium latent virus (isolate Lolium/USA/US1/-)</name>
    <name type="common">LoLV</name>
    <dbReference type="NCBI Taxonomy" id="686945"/>
    <lineage>
        <taxon>Viruses</taxon>
        <taxon>Riboviria</taxon>
        <taxon>Orthornavirae</taxon>
        <taxon>Kitrinoviricota</taxon>
        <taxon>Alsuviricetes</taxon>
        <taxon>Tymovirales</taxon>
        <taxon>Alphaflexiviridae</taxon>
        <taxon>Lolavirus</taxon>
        <taxon>Lolium latent virus</taxon>
    </lineage>
</organism>
<reference key="1">
    <citation type="submission" date="2008-03" db="EMBL/GenBank/DDBJ databases">
        <title>Molecular characterization of Lolium latent virus, proposed type member of a new genus in the family Flexiviridae.</title>
        <authorList>
            <person name="Vaira A.M.V."/>
            <person name="Maroon-Lango C.J."/>
            <person name="Hammond J."/>
        </authorList>
    </citation>
    <scope>NUCLEOTIDE SEQUENCE [GENOMIC RNA]</scope>
</reference>
<reference key="2">
    <citation type="journal article" date="2018" name="J. Gen. Virol.">
        <title>The interaction of Lolium latent virus major coat protein with ankyrin repeat protein NbANKr redirects it to chloroplasts and modulates virus infection.</title>
        <authorList>
            <person name="Vaira A.M."/>
            <person name="Lim H.S."/>
            <person name="Bauchan G."/>
            <person name="Gulbronson C.J."/>
            <person name="Miozzi L."/>
            <person name="Vinals N."/>
            <person name="Natilla A."/>
            <person name="Hammond J."/>
        </authorList>
    </citation>
    <scope>SUBCELLULAR LOCATION</scope>
    <scope>INTERACTION WITH HOST NBANKR</scope>
</reference>
<keyword id="KW-0167">Capsid protein</keyword>
<keyword id="KW-1139">Helical capsid protein</keyword>
<keyword id="KW-0945">Host-virus interaction</keyword>
<keyword id="KW-1185">Reference proteome</keyword>
<keyword id="KW-0687">Ribonucleoprotein</keyword>
<keyword id="KW-0946">Virion</keyword>
<organismHost>
    <name type="scientific">Lolium multiflorum x Lolium perenne</name>
    <dbReference type="NCBI Taxonomy" id="480553"/>
</organismHost>
<name>CAPSD_LOLV</name>
<feature type="chain" id="PRO_0000404269" description="Capsid protein">
    <location>
        <begin position="1"/>
        <end position="293"/>
    </location>
</feature>
<feature type="region of interest" description="Disordered" evidence="2">
    <location>
        <begin position="1"/>
        <end position="49"/>
    </location>
</feature>
<feature type="compositionally biased region" description="Basic and acidic residues" evidence="2">
    <location>
        <begin position="1"/>
        <end position="14"/>
    </location>
</feature>
<feature type="compositionally biased region" description="Low complexity" evidence="2">
    <location>
        <begin position="18"/>
        <end position="37"/>
    </location>
</feature>
<sequence>MSESKAETPSKSAEKGVASLSTSAPPSSTTPTAQAKQTPPPVATTARPMASRLPRTIAAEGGGTEKKQSHLAEDRIAQYLPKQDAVDHSNLAALLQPFTEASYEREFDVKVNGIASKAELTAVAETWASRLNVPKENSAVLAQEIAIHCYHNGSSEQTDFNLKSSQVAGLNLEAAVGVIKEILTLRQFAAYYATFVWNWGIKNEIPPANWVAKGYTDETKYAAFDTFSYVGSPLGLRITPTRKPTNNEYMAASVNAREKIIQSRGKGMVTNSPMFSDGTTHQGIPLHPKLPLS</sequence>
<evidence type="ECO:0000250" key="1"/>
<evidence type="ECO:0000256" key="2">
    <source>
        <dbReference type="SAM" id="MobiDB-lite"/>
    </source>
</evidence>
<evidence type="ECO:0000269" key="3">
    <source>
    </source>
</evidence>
<evidence type="ECO:0000305" key="4"/>
<gene>
    <name type="primary">ORF5</name>
</gene>
<protein>
    <recommendedName>
        <fullName>Capsid protein</fullName>
        <shortName>CP</shortName>
    </recommendedName>
    <alternativeName>
        <fullName>Coat protein</fullName>
    </alternativeName>
</protein>